<gene>
    <name type="primary">pmfR</name>
    <name type="ORF">ORF67</name>
</gene>
<evidence type="ECO:0000269" key="1">
    <source>
    </source>
</evidence>
<evidence type="ECO:0000269" key="2">
    <source>
    </source>
</evidence>
<evidence type="ECO:0000269" key="3">
    <source>
    </source>
</evidence>
<comment type="function">
    <text evidence="1 2 3">Transcriptional regulator involved in the activation of the purU-mabO-folD-nepA-nepB and mao-ORF55-nbr operons implicated in the nicotine catabolic pathway. The sequence GTTT-14 bp-AAAC seems to be the core binding site of the regulator upstream of the -35 promoter region of the operon.</text>
</comment>
<comment type="pathway">
    <text evidence="1">Alkaloid degradation; nicotine degradation [regulation].</text>
</comment>
<comment type="subunit">
    <text evidence="1">Forms oligomers in solution, probably homotetramers.</text>
</comment>
<comment type="disruption phenotype">
    <text evidence="1 2 3">Cells lacking this gene do not produce the MabO protein in the presence of nicotine, in contrast to the wild-type. Transcription of the nepAB genes and of the mao-ORF55-nbr operon is abolished in the mutant strain.</text>
</comment>
<name>PMFR_PAENI</name>
<dbReference type="EMBL" id="AJ507836">
    <property type="protein sequence ID" value="CAD47925.1"/>
    <property type="molecule type" value="Genomic_DNA"/>
</dbReference>
<dbReference type="RefSeq" id="WP_016359436.1">
    <property type="nucleotide sequence ID" value="NZ_JAGINZ010000002.1"/>
</dbReference>
<dbReference type="RefSeq" id="YP_007988751.1">
    <property type="nucleotide sequence ID" value="NC_021229.1"/>
</dbReference>
<dbReference type="SMR" id="Q8GAH9"/>
<dbReference type="GeneID" id="84020272"/>
<dbReference type="UniPathway" id="UPA00106"/>
<dbReference type="GO" id="GO:0003677">
    <property type="term" value="F:DNA binding"/>
    <property type="evidence" value="ECO:0000314"/>
    <property type="project" value="UniProtKB"/>
</dbReference>
<dbReference type="GO" id="GO:0003700">
    <property type="term" value="F:DNA-binding transcription factor activity"/>
    <property type="evidence" value="ECO:0000315"/>
    <property type="project" value="UniProtKB"/>
</dbReference>
<dbReference type="GO" id="GO:0019608">
    <property type="term" value="P:nicotine catabolic process"/>
    <property type="evidence" value="ECO:0007669"/>
    <property type="project" value="UniProtKB-UniPathway"/>
</dbReference>
<dbReference type="GO" id="GO:0045893">
    <property type="term" value="P:positive regulation of DNA-templated transcription"/>
    <property type="evidence" value="ECO:0000315"/>
    <property type="project" value="UniProtKB"/>
</dbReference>
<dbReference type="Gene3D" id="1.10.10.2840">
    <property type="entry name" value="PucR C-terminal helix-turn-helix domain"/>
    <property type="match status" value="1"/>
</dbReference>
<dbReference type="InterPro" id="IPR051448">
    <property type="entry name" value="CdaR-like_regulators"/>
</dbReference>
<dbReference type="InterPro" id="IPR025736">
    <property type="entry name" value="PucR_C-HTH_dom"/>
</dbReference>
<dbReference type="InterPro" id="IPR042070">
    <property type="entry name" value="PucR_C-HTH_sf"/>
</dbReference>
<dbReference type="InterPro" id="IPR012914">
    <property type="entry name" value="PucR_dom"/>
</dbReference>
<dbReference type="InterPro" id="IPR054821">
    <property type="entry name" value="Trans_act_PmfR"/>
</dbReference>
<dbReference type="NCBIfam" id="NF045769">
    <property type="entry name" value="TransActPmfR"/>
    <property type="match status" value="1"/>
</dbReference>
<dbReference type="PANTHER" id="PTHR33744">
    <property type="entry name" value="CARBOHYDRATE DIACID REGULATOR"/>
    <property type="match status" value="1"/>
</dbReference>
<dbReference type="PANTHER" id="PTHR33744:SF1">
    <property type="entry name" value="DNA-BINDING TRANSCRIPTIONAL ACTIVATOR ADER"/>
    <property type="match status" value="1"/>
</dbReference>
<dbReference type="Pfam" id="PF13556">
    <property type="entry name" value="HTH_30"/>
    <property type="match status" value="1"/>
</dbReference>
<dbReference type="Pfam" id="PF07905">
    <property type="entry name" value="PucR"/>
    <property type="match status" value="1"/>
</dbReference>
<geneLocation type="plasmid">
    <name>pAO1</name>
</geneLocation>
<reference key="1">
    <citation type="journal article" date="2003" name="J. Bacteriol.">
        <title>Sequence of the 165-kilobase catabolic plasmid pAO1 from Arthrobacter nicotinovorans and identification of a pAO1-dependent nicotine uptake system.</title>
        <authorList>
            <person name="Igloi G.L."/>
            <person name="Brandsch R."/>
        </authorList>
    </citation>
    <scope>NUCLEOTIDE SEQUENCE [GENOMIC DNA]</scope>
    <source>
        <strain>ATCC 49919 / DSM 420 / JCM 3874 / KCTC 9902 / LMG 16253 / NBRC 15511</strain>
        <plasmid>pAO1</plasmid>
    </source>
</reference>
<reference key="2">
    <citation type="journal article" date="2005" name="J. Bacteriol.">
        <title>Characterization of PmfR, the transcriptional activator of the pAO1-borne purU-mabO-folD operon of Arthrobacter nicotinovorans.</title>
        <authorList>
            <person name="Chiribau C.B."/>
            <person name="Sandu C."/>
            <person name="Igloi G.L."/>
            <person name="Brandsch R."/>
        </authorList>
    </citation>
    <scope>FUNCTION AS A TRANSCRIPTIONAL ACTIVATOR</scope>
    <scope>DNA-BINDING</scope>
    <scope>GENE NAME</scope>
    <scope>PATHWAY</scope>
    <scope>SUBUNIT</scope>
    <scope>DISRUPTION PHENOTYPE</scope>
    <source>
        <strain>ATCC 49919 / DSM 420 / JCM 3874 / KCTC 9902 / LMG 16253 / NBRC 15511</strain>
        <plasmid>pAO1</plasmid>
    </source>
</reference>
<reference key="3">
    <citation type="journal article" date="2007" name="Appl. Environ. Microbiol.">
        <title>An NAD(P)H-nicotine blue oxidoreductase is part of the nicotine regulon and may protect Arthrobacter nicotinovorans from oxidative stress during nicotine catabolism.</title>
        <authorList>
            <person name="Mihasan M."/>
            <person name="Chiribau C.B."/>
            <person name="Friedrich T."/>
            <person name="Artenie V."/>
            <person name="Brandsch R."/>
        </authorList>
    </citation>
    <scope>FUNCTION</scope>
    <scope>DISRUPTION PHENOTYPE</scope>
    <source>
        <strain>ATCC 49919 / DSM 420 / JCM 3874 / KCTC 9902 / LMG 16253 / NBRC 15511</strain>
        <plasmid>pAO1</plasmid>
    </source>
</reference>
<reference key="4">
    <citation type="journal article" date="2007" name="Microbiology">
        <title>A two-component small multidrug resistance pump functions as a metabolic valve during nicotine catabolism by Arthrobacter nicotinovorans.</title>
        <authorList>
            <person name="Ganas P."/>
            <person name="Mihasan M."/>
            <person name="Igloi G.L."/>
            <person name="Brandsch R."/>
        </authorList>
    </citation>
    <scope>FUNCTION</scope>
    <scope>DISRUPTION PHENOTYPE</scope>
    <source>
        <strain>ATCC 49919 / DSM 420 / JCM 3874 / KCTC 9902 / LMG 16253 / NBRC 15511</strain>
        <plasmid>pAO1</plasmid>
    </source>
</reference>
<feature type="chain" id="PRO_0000429451" description="Transcriptional activator PmfR">
    <location>
        <begin position="1"/>
        <end position="470"/>
    </location>
</feature>
<accession>Q8GAH9</accession>
<proteinExistence type="evidence at protein level"/>
<sequence>MEQQVLTVRDLVTAQSLGMKVLSGAGGLDRQVLWAHSCELSDPDRWLGPHELLMTVGLCVPHSAVEQRNFIVKLDEAGLSGVALGDHNSLPPLTRELYEEADRRSFPVLLTNQATPFAAIGRTVAAATATTQTMQVLKLSKLYQLSTYARTDPLRMMNDLQALLRAGLSVFDVQTGLTIVEGAPLEFMPTSVRERTYALPGDSDSRLMISEYPGEEVSSFLLIHVLQVIDVALSQLLRSLRRRSERSTQMLASIFEGRSPDGLGSILGPSGTSSGYQFVAVALEDSEKVARAASIKSLPVLAGPGSSSFFILMPEQSRNDVRNLLHGLDVRAGVSSTYLDLRDAKAAADEAAKIFSSGGTNGLWTDFTGVPVSLLTRSRKEASAIVQQVLGRLAGTDPKITVLRETLFAFLANDRRWNETAAALGIHRQTLSYRLTRIKEITGRDIASSADLSAFWLAFQAWPSFSDRSD</sequence>
<keyword id="KW-0010">Activator</keyword>
<keyword id="KW-0238">DNA-binding</keyword>
<keyword id="KW-0614">Plasmid</keyword>
<keyword id="KW-0804">Transcription</keyword>
<keyword id="KW-0805">Transcription regulation</keyword>
<organism>
    <name type="scientific">Paenarthrobacter nicotinovorans</name>
    <name type="common">Arthrobacter nicotinovorans</name>
    <dbReference type="NCBI Taxonomy" id="29320"/>
    <lineage>
        <taxon>Bacteria</taxon>
        <taxon>Bacillati</taxon>
        <taxon>Actinomycetota</taxon>
        <taxon>Actinomycetes</taxon>
        <taxon>Micrococcales</taxon>
        <taxon>Micrococcaceae</taxon>
        <taxon>Paenarthrobacter</taxon>
    </lineage>
</organism>
<protein>
    <recommendedName>
        <fullName>Transcriptional activator PmfR</fullName>
    </recommendedName>
</protein>